<gene>
    <name evidence="1" type="primary">psbH</name>
</gene>
<feature type="chain" id="PRO_0000275779" description="Photosystem II reaction center protein H">
    <location>
        <begin position="1"/>
        <end position="75"/>
    </location>
</feature>
<feature type="transmembrane region" description="Helical" evidence="1">
    <location>
        <begin position="41"/>
        <end position="61"/>
    </location>
</feature>
<feature type="modified residue" description="Phosphothreonine" evidence="1">
    <location>
        <position position="3"/>
    </location>
</feature>
<feature type="modified residue" description="Phosphothreonine" evidence="1">
    <location>
        <position position="5"/>
    </location>
</feature>
<sequence>MATQTIKQTSTSKGRQTSVGDILKPLNSEYGKVAPGWGTTVLMAVFMALFAVFLVIILELYNASVLLDGLAVSWQ</sequence>
<keyword id="KW-0150">Chloroplast</keyword>
<keyword id="KW-0472">Membrane</keyword>
<keyword id="KW-0597">Phosphoprotein</keyword>
<keyword id="KW-0602">Photosynthesis</keyword>
<keyword id="KW-0604">Photosystem II</keyword>
<keyword id="KW-0934">Plastid</keyword>
<keyword id="KW-0793">Thylakoid</keyword>
<keyword id="KW-0812">Transmembrane</keyword>
<keyword id="KW-1133">Transmembrane helix</keyword>
<dbReference type="EMBL" id="AY958086">
    <property type="protein sequence ID" value="AAX45842.1"/>
    <property type="molecule type" value="Genomic_DNA"/>
</dbReference>
<dbReference type="RefSeq" id="YP_636473.1">
    <property type="nucleotide sequence ID" value="NC_008117.1"/>
</dbReference>
<dbReference type="SMR" id="Q32RQ3"/>
<dbReference type="GeneID" id="4108162"/>
<dbReference type="GO" id="GO:0009535">
    <property type="term" value="C:chloroplast thylakoid membrane"/>
    <property type="evidence" value="ECO:0007669"/>
    <property type="project" value="UniProtKB-SubCell"/>
</dbReference>
<dbReference type="GO" id="GO:0009523">
    <property type="term" value="C:photosystem II"/>
    <property type="evidence" value="ECO:0007669"/>
    <property type="project" value="UniProtKB-KW"/>
</dbReference>
<dbReference type="GO" id="GO:0042301">
    <property type="term" value="F:phosphate ion binding"/>
    <property type="evidence" value="ECO:0007669"/>
    <property type="project" value="InterPro"/>
</dbReference>
<dbReference type="GO" id="GO:0015979">
    <property type="term" value="P:photosynthesis"/>
    <property type="evidence" value="ECO:0007669"/>
    <property type="project" value="UniProtKB-UniRule"/>
</dbReference>
<dbReference type="GO" id="GO:0050821">
    <property type="term" value="P:protein stabilization"/>
    <property type="evidence" value="ECO:0007669"/>
    <property type="project" value="InterPro"/>
</dbReference>
<dbReference type="Gene3D" id="1.20.5.880">
    <property type="entry name" value="Photosystem II reaction center protein H"/>
    <property type="match status" value="1"/>
</dbReference>
<dbReference type="HAMAP" id="MF_00752">
    <property type="entry name" value="PSII_PsbH"/>
    <property type="match status" value="1"/>
</dbReference>
<dbReference type="InterPro" id="IPR001056">
    <property type="entry name" value="PSII_PsbH"/>
</dbReference>
<dbReference type="InterPro" id="IPR036863">
    <property type="entry name" value="PSII_PsbH_sf"/>
</dbReference>
<dbReference type="NCBIfam" id="NF002728">
    <property type="entry name" value="PRK02624.1"/>
    <property type="match status" value="1"/>
</dbReference>
<dbReference type="PANTHER" id="PTHR34469">
    <property type="entry name" value="PHOTOSYSTEM II REACTION CENTER PROTEIN H"/>
    <property type="match status" value="1"/>
</dbReference>
<dbReference type="PANTHER" id="PTHR34469:SF4">
    <property type="entry name" value="PHOTOSYSTEM II REACTION CENTER PROTEIN H"/>
    <property type="match status" value="1"/>
</dbReference>
<dbReference type="Pfam" id="PF00737">
    <property type="entry name" value="PsbH"/>
    <property type="match status" value="1"/>
</dbReference>
<dbReference type="SUPFAM" id="SSF161025">
    <property type="entry name" value="Photosystem II 10 kDa phosphoprotein PsbH"/>
    <property type="match status" value="1"/>
</dbReference>
<protein>
    <recommendedName>
        <fullName evidence="1">Photosystem II reaction center protein H</fullName>
        <shortName evidence="1">PSII-H</shortName>
    </recommendedName>
    <alternativeName>
        <fullName evidence="1">Photosystem II 10 kDa phosphoprotein</fullName>
    </alternativeName>
</protein>
<proteinExistence type="inferred from homology"/>
<accession>Q32RQ3</accession>
<reference key="1">
    <citation type="journal article" date="2005" name="BMC Biol.">
        <title>The complete chloroplast DNA sequences of the charophycean green algae Staurastrum and Zygnema reveal that the chloroplast genome underwent extensive changes during the evolution of the Zygnematales.</title>
        <authorList>
            <person name="Turmel M."/>
            <person name="Otis C."/>
            <person name="Lemieux C."/>
        </authorList>
    </citation>
    <scope>NUCLEOTIDE SEQUENCE [LARGE SCALE GENOMIC DNA]</scope>
</reference>
<evidence type="ECO:0000255" key="1">
    <source>
        <dbReference type="HAMAP-Rule" id="MF_00752"/>
    </source>
</evidence>
<organism>
    <name type="scientific">Zygnema circumcarinatum</name>
    <name type="common">Green alga</name>
    <dbReference type="NCBI Taxonomy" id="35869"/>
    <lineage>
        <taxon>Eukaryota</taxon>
        <taxon>Viridiplantae</taxon>
        <taxon>Streptophyta</taxon>
        <taxon>Zygnematophyceae</taxon>
        <taxon>Zygnematophycidae</taxon>
        <taxon>Zygnematales</taxon>
        <taxon>Zygnemataceae</taxon>
        <taxon>Zygnema</taxon>
    </lineage>
</organism>
<geneLocation type="chloroplast"/>
<name>PSBH_ZYGCR</name>
<comment type="function">
    <text evidence="1">One of the components of the core complex of photosystem II (PSII), required for its stability and/or assembly. PSII is a light-driven water:plastoquinone oxidoreductase that uses light energy to abstract electrons from H(2)O, generating O(2) and a proton gradient subsequently used for ATP formation. It consists of a core antenna complex that captures photons, and an electron transfer chain that converts photonic excitation into a charge separation.</text>
</comment>
<comment type="subunit">
    <text evidence="1">PSII is composed of 1 copy each of membrane proteins PsbA, PsbB, PsbC, PsbD, PsbE, PsbF, PsbH, PsbI, PsbJ, PsbK, PsbL, PsbM, PsbT, PsbX, PsbY, PsbZ, Psb30/Ycf12, at least 3 peripheral proteins of the oxygen-evolving complex and a large number of cofactors. It forms dimeric complexes.</text>
</comment>
<comment type="subcellular location">
    <subcellularLocation>
        <location evidence="1">Plastid</location>
        <location evidence="1">Chloroplast thylakoid membrane</location>
        <topology evidence="1">Single-pass membrane protein</topology>
    </subcellularLocation>
</comment>
<comment type="PTM">
    <text evidence="1">Phosphorylation is a light-dependent reaction catalyzed by a membrane-bound kinase; phosphorylation occurs on Thr residue(s) in the N-terminus of the protein.</text>
</comment>
<comment type="similarity">
    <text evidence="1">Belongs to the PsbH family.</text>
</comment>